<name>PAP1_BRACM</name>
<reference key="1">
    <citation type="journal article" date="2001" name="Plant Physiol.">
        <title>Brassica rapa has three genes that encode proteins associated with different neutral lipids in plastids of specific tissues.</title>
        <authorList>
            <person name="Kim H.U."/>
            <person name="Wu S.S.H."/>
            <person name="Ratnayake C."/>
            <person name="Huang A.H.C."/>
        </authorList>
    </citation>
    <scope>NUCLEOTIDE SEQUENCE [GENOMIC DNA / MRNA]</scope>
    <scope>PROTEIN SEQUENCE OF 85-97</scope>
    <scope>TISSUE SPECIFICITY</scope>
    <scope>DEVELOPMENTAL STAGE</scope>
</reference>
<sequence length="327" mass="35644">MATTVPLFSQFTCKTPITSSSTSSFQSKSPILLPINPINRRIAVHRHDFKVRASDVNDEWGPDSKGRGGDVDDEWGPEIGLNSSVAEKVAEEAIESAEETERLKRVLAGSLYGTDRGLSASSETRAEISELITQLESKNPNPAPNEALFLLNGKWILVYTSFVGLFPLLSRRISPLVKVDEISQTIDSDSFTVHNSVRFASPLATTSLSTNAKFEVRSPKRVQVKFEQGVIGTPQLTDSIEIPEFVEVLGQKIDLNPIKGLLTSVQDTASSVARTISSQPPLKFSLPGDSAQSWLLTTYLDKDLRISRGDGGSVFVLIREGSSLLNP</sequence>
<gene>
    <name type="primary">PAP1</name>
</gene>
<feature type="transit peptide" description="Chloroplast" evidence="3">
    <location>
        <begin position="1"/>
        <end position="84"/>
    </location>
</feature>
<feature type="chain" id="PRO_0000023205" description="Plastid lipid-associated protein 1, chloroplastic">
    <location>
        <begin position="85"/>
        <end position="327"/>
    </location>
</feature>
<feature type="region of interest" description="Disordered" evidence="2">
    <location>
        <begin position="56"/>
        <end position="78"/>
    </location>
</feature>
<feature type="coiled-coil region" evidence="1">
    <location>
        <begin position="85"/>
        <end position="107"/>
    </location>
</feature>
<feature type="sequence conflict" description="In Ref. 1; AAK57561." evidence="4" ref="1">
    <original>L</original>
    <variation>F</variation>
    <location>
        <position position="249"/>
    </location>
</feature>
<dbReference type="EMBL" id="AF290566">
    <property type="protein sequence ID" value="AAK57564.1"/>
    <property type="molecule type" value="Genomic_DNA"/>
</dbReference>
<dbReference type="EMBL" id="AF290563">
    <property type="protein sequence ID" value="AAK57561.1"/>
    <property type="molecule type" value="mRNA"/>
</dbReference>
<dbReference type="SMR" id="Q94FZ9"/>
<dbReference type="EnsemblPlants" id="Bra000785.1">
    <property type="protein sequence ID" value="Bra000785.1-P"/>
    <property type="gene ID" value="Bra000785"/>
</dbReference>
<dbReference type="GeneID" id="103858647"/>
<dbReference type="Gramene" id="Bra000785.1">
    <property type="protein sequence ID" value="Bra000785.1-P"/>
    <property type="gene ID" value="Bra000785"/>
</dbReference>
<dbReference type="KEGG" id="brp:103858647"/>
<dbReference type="OMA" id="HDFKIRA"/>
<dbReference type="OrthoDB" id="498392at2759"/>
<dbReference type="Proteomes" id="UP000011750">
    <property type="component" value="Chromosome A03"/>
</dbReference>
<dbReference type="GO" id="GO:0009507">
    <property type="term" value="C:chloroplast"/>
    <property type="evidence" value="ECO:0007669"/>
    <property type="project" value="UniProtKB-SubCell"/>
</dbReference>
<dbReference type="InterPro" id="IPR039633">
    <property type="entry name" value="PAP"/>
</dbReference>
<dbReference type="InterPro" id="IPR006843">
    <property type="entry name" value="PAP/fibrillin_dom"/>
</dbReference>
<dbReference type="PANTHER" id="PTHR31906">
    <property type="entry name" value="PLASTID-LIPID-ASSOCIATED PROTEIN 4, CHLOROPLASTIC-RELATED"/>
    <property type="match status" value="1"/>
</dbReference>
<dbReference type="Pfam" id="PF04755">
    <property type="entry name" value="PAP_fibrillin"/>
    <property type="match status" value="1"/>
</dbReference>
<keyword id="KW-0150">Chloroplast</keyword>
<keyword id="KW-0175">Coiled coil</keyword>
<keyword id="KW-0903">Direct protein sequencing</keyword>
<keyword id="KW-0934">Plastid</keyword>
<keyword id="KW-1185">Reference proteome</keyword>
<keyword id="KW-0809">Transit peptide</keyword>
<organism>
    <name type="scientific">Brassica campestris</name>
    <name type="common">Field mustard</name>
    <dbReference type="NCBI Taxonomy" id="3711"/>
    <lineage>
        <taxon>Eukaryota</taxon>
        <taxon>Viridiplantae</taxon>
        <taxon>Streptophyta</taxon>
        <taxon>Embryophyta</taxon>
        <taxon>Tracheophyta</taxon>
        <taxon>Spermatophyta</taxon>
        <taxon>Magnoliopsida</taxon>
        <taxon>eudicotyledons</taxon>
        <taxon>Gunneridae</taxon>
        <taxon>Pentapetalae</taxon>
        <taxon>rosids</taxon>
        <taxon>malvids</taxon>
        <taxon>Brassicales</taxon>
        <taxon>Brassicaceae</taxon>
        <taxon>Brassiceae</taxon>
        <taxon>Brassica</taxon>
    </lineage>
</organism>
<proteinExistence type="evidence at protein level"/>
<protein>
    <recommendedName>
        <fullName>Plastid lipid-associated protein 1, chloroplastic</fullName>
    </recommendedName>
</protein>
<evidence type="ECO:0000255" key="1"/>
<evidence type="ECO:0000256" key="2">
    <source>
        <dbReference type="SAM" id="MobiDB-lite"/>
    </source>
</evidence>
<evidence type="ECO:0000269" key="3">
    <source>
    </source>
</evidence>
<evidence type="ECO:0000305" key="4"/>
<accession>Q94FZ9</accession>
<accession>Q94KU9</accession>
<comment type="function">
    <text>May modulate the action of carotenoids.</text>
</comment>
<comment type="subcellular location">
    <subcellularLocation>
        <location>Plastid</location>
        <location>Chloroplast</location>
    </subcellularLocation>
</comment>
<comment type="tissue specificity">
    <text evidence="3">Expressed in anthers, sepals seeds, fruit coats, and leaves. Very low in petals and pistils and not detected in roots.</text>
</comment>
<comment type="developmental stage">
    <text evidence="3">Most abundant in anthers when the tapetum cells start to accumulate steryl-ester globules. High expression in mature leaves, medium in young leaves, and low in senescing leaves.</text>
</comment>
<comment type="induction">
    <text>Down-regulated by drought and oxidative stresses. Up-regulated by wounding.</text>
</comment>
<comment type="similarity">
    <text evidence="4">Belongs to the PAP/fibrillin family.</text>
</comment>